<accession>C4JK49</accession>
<feature type="signal peptide" evidence="2">
    <location>
        <begin position="1"/>
        <end position="19"/>
    </location>
</feature>
<feature type="propeptide" id="PRO_0000407132" evidence="1">
    <location>
        <begin position="20"/>
        <end position="179"/>
    </location>
</feature>
<feature type="chain" id="PRO_0000407133" description="Neutral protease 2 homolog UREG_02006">
    <location>
        <begin position="180"/>
        <end position="357"/>
    </location>
</feature>
<feature type="active site" evidence="1">
    <location>
        <position position="309"/>
    </location>
</feature>
<feature type="binding site" evidence="1">
    <location>
        <position position="308"/>
    </location>
    <ligand>
        <name>Zn(2+)</name>
        <dbReference type="ChEBI" id="CHEBI:29105"/>
        <note>catalytic</note>
    </ligand>
</feature>
<feature type="binding site" evidence="1">
    <location>
        <position position="312"/>
    </location>
    <ligand>
        <name>Zn(2+)</name>
        <dbReference type="ChEBI" id="CHEBI:29105"/>
        <note>catalytic</note>
    </ligand>
</feature>
<feature type="binding site" evidence="1">
    <location>
        <position position="323"/>
    </location>
    <ligand>
        <name>Zn(2+)</name>
        <dbReference type="ChEBI" id="CHEBI:29105"/>
        <note>catalytic</note>
    </ligand>
</feature>
<feature type="disulfide bond" evidence="1">
    <location>
        <begin position="187"/>
        <end position="259"/>
    </location>
</feature>
<feature type="disulfide bond" evidence="1">
    <location>
        <begin position="266"/>
        <end position="284"/>
    </location>
</feature>
<organism>
    <name type="scientific">Uncinocarpus reesii (strain UAMH 1704)</name>
    <dbReference type="NCBI Taxonomy" id="336963"/>
    <lineage>
        <taxon>Eukaryota</taxon>
        <taxon>Fungi</taxon>
        <taxon>Dikarya</taxon>
        <taxon>Ascomycota</taxon>
        <taxon>Pezizomycotina</taxon>
        <taxon>Eurotiomycetes</taxon>
        <taxon>Eurotiomycetidae</taxon>
        <taxon>Onygenales</taxon>
        <taxon>Onygenaceae</taxon>
        <taxon>Uncinocarpus</taxon>
    </lineage>
</organism>
<proteinExistence type="inferred from homology"/>
<reference key="1">
    <citation type="journal article" date="2009" name="Genome Res.">
        <title>Comparative genomic analyses of the human fungal pathogens Coccidioides and their relatives.</title>
        <authorList>
            <person name="Sharpton T.J."/>
            <person name="Stajich J.E."/>
            <person name="Rounsley S.D."/>
            <person name="Gardner M.J."/>
            <person name="Wortman J.R."/>
            <person name="Jordar V.S."/>
            <person name="Maiti R."/>
            <person name="Kodira C.D."/>
            <person name="Neafsey D.E."/>
            <person name="Zeng Q."/>
            <person name="Hung C.-Y."/>
            <person name="McMahan C."/>
            <person name="Muszewska A."/>
            <person name="Grynberg M."/>
            <person name="Mandel M.A."/>
            <person name="Kellner E.M."/>
            <person name="Barker B.M."/>
            <person name="Galgiani J.N."/>
            <person name="Orbach M.J."/>
            <person name="Kirkland T.N."/>
            <person name="Cole G.T."/>
            <person name="Henn M.R."/>
            <person name="Birren B.W."/>
            <person name="Taylor J.W."/>
        </authorList>
    </citation>
    <scope>NUCLEOTIDE SEQUENCE [LARGE SCALE GENOMIC DNA]</scope>
    <source>
        <strain>UAMH 1704</strain>
    </source>
</reference>
<keyword id="KW-0165">Cleavage on pair of basic residues</keyword>
<keyword id="KW-1015">Disulfide bond</keyword>
<keyword id="KW-0378">Hydrolase</keyword>
<keyword id="KW-0479">Metal-binding</keyword>
<keyword id="KW-0482">Metalloprotease</keyword>
<keyword id="KW-0645">Protease</keyword>
<keyword id="KW-1185">Reference proteome</keyword>
<keyword id="KW-0964">Secreted</keyword>
<keyword id="KW-0732">Signal</keyword>
<keyword id="KW-0862">Zinc</keyword>
<keyword id="KW-0865">Zymogen</keyword>
<sequence length="357" mass="38434">MLFSSRFLALAALLGQALALPIDDFSQSDAGLKVKLTSMGNTRVKAVVTNEGEQEISFLKFNTFFDSAPTQKVQIMKAGSLIPFSGVDFYFNMANLPAEAFKTLAPGASAEAEFDIAATADLSPGGSYTVSSAGFLRIAGGNGTAITGRMRYRSNQMKLNVDGDMAAKVQSAVPTIEKRTRIDGNSCRGNYGQLLSRALQGCSSYAGRAAQAASNGDAQKFQEYFKTNSPQVRQSVAARFQAIVQECSSASNGKTTYLCEDRFRFCQPGLIAYTIPTQSVVANCPSYWKLPPVVNRGLEPDHGYVVVHEFTHATSIFSPGTEDHGYGYEECRRLNAQQSLSNADNYSLFAAAVSRGA</sequence>
<name>NPIIB_UNCRE</name>
<protein>
    <recommendedName>
        <fullName>Neutral protease 2 homolog UREG_02006</fullName>
        <ecNumber>3.4.24.39</ecNumber>
    </recommendedName>
    <alternativeName>
        <fullName>Deuterolysin UREG_02006</fullName>
    </alternativeName>
</protein>
<gene>
    <name type="ORF">UREG_02006</name>
</gene>
<evidence type="ECO:0000250" key="1"/>
<evidence type="ECO:0000255" key="2"/>
<evidence type="ECO:0000305" key="3"/>
<comment type="function">
    <text evidence="1">Secreted metalloproteinase that allows assimilation of proteinaceous substrates. Shows high activities on basic nuclear substrates such as histone and protamine (By similarity).</text>
</comment>
<comment type="catalytic activity">
    <reaction>
        <text>Preferential cleavage of bonds with hydrophobic residues in P1'. Also 3-Asn-|-Gln-4 and 8-Gly-|-Ser-9 bonds in insulin B chain.</text>
        <dbReference type="EC" id="3.4.24.39"/>
    </reaction>
</comment>
<comment type="cofactor">
    <cofactor evidence="1">
        <name>Zn(2+)</name>
        <dbReference type="ChEBI" id="CHEBI:29105"/>
    </cofactor>
    <text evidence="1">Binds 1 zinc ion per subunit.</text>
</comment>
<comment type="subcellular location">
    <subcellularLocation>
        <location evidence="1">Secreted</location>
    </subcellularLocation>
</comment>
<comment type="similarity">
    <text evidence="3">Belongs to the peptidase M35 family.</text>
</comment>
<dbReference type="EC" id="3.4.24.39"/>
<dbReference type="EMBL" id="CH476615">
    <property type="protein sequence ID" value="EEP77157.1"/>
    <property type="molecule type" value="Genomic_DNA"/>
</dbReference>
<dbReference type="RefSeq" id="XP_002542490.1">
    <property type="nucleotide sequence ID" value="XM_002542444.1"/>
</dbReference>
<dbReference type="SMR" id="C4JK49"/>
<dbReference type="STRING" id="336963.C4JK49"/>
<dbReference type="GeneID" id="8440442"/>
<dbReference type="KEGG" id="ure:UREG_02006"/>
<dbReference type="VEuPathDB" id="FungiDB:UREG_02006"/>
<dbReference type="eggNOG" id="ENOG502SGF5">
    <property type="taxonomic scope" value="Eukaryota"/>
</dbReference>
<dbReference type="HOGENOM" id="CLU_039313_1_1_1"/>
<dbReference type="InParanoid" id="C4JK49"/>
<dbReference type="OMA" id="NEIANCD"/>
<dbReference type="OrthoDB" id="412874at2759"/>
<dbReference type="BRENDA" id="3.4.24.39">
    <property type="organism ID" value="8258"/>
</dbReference>
<dbReference type="Proteomes" id="UP000002058">
    <property type="component" value="Unassembled WGS sequence"/>
</dbReference>
<dbReference type="GO" id="GO:0005576">
    <property type="term" value="C:extracellular region"/>
    <property type="evidence" value="ECO:0007669"/>
    <property type="project" value="UniProtKB-SubCell"/>
</dbReference>
<dbReference type="GO" id="GO:0046872">
    <property type="term" value="F:metal ion binding"/>
    <property type="evidence" value="ECO:0007669"/>
    <property type="project" value="UniProtKB-KW"/>
</dbReference>
<dbReference type="GO" id="GO:0004222">
    <property type="term" value="F:metalloendopeptidase activity"/>
    <property type="evidence" value="ECO:0007669"/>
    <property type="project" value="InterPro"/>
</dbReference>
<dbReference type="GO" id="GO:0006508">
    <property type="term" value="P:proteolysis"/>
    <property type="evidence" value="ECO:0007669"/>
    <property type="project" value="UniProtKB-KW"/>
</dbReference>
<dbReference type="CDD" id="cd11008">
    <property type="entry name" value="M35_deuterolysin_like"/>
    <property type="match status" value="1"/>
</dbReference>
<dbReference type="Gene3D" id="2.60.40.2970">
    <property type="match status" value="1"/>
</dbReference>
<dbReference type="Gene3D" id="3.40.390.10">
    <property type="entry name" value="Collagenase (Catalytic Domain)"/>
    <property type="match status" value="1"/>
</dbReference>
<dbReference type="InterPro" id="IPR050414">
    <property type="entry name" value="Fungal_M35_metalloproteases"/>
</dbReference>
<dbReference type="InterPro" id="IPR029463">
    <property type="entry name" value="Lys_MEP"/>
</dbReference>
<dbReference type="InterPro" id="IPR024079">
    <property type="entry name" value="MetalloPept_cat_dom_sf"/>
</dbReference>
<dbReference type="InterPro" id="IPR001384">
    <property type="entry name" value="Peptidase_M35"/>
</dbReference>
<dbReference type="PANTHER" id="PTHR37016">
    <property type="match status" value="1"/>
</dbReference>
<dbReference type="PANTHER" id="PTHR37016:SF3">
    <property type="entry name" value="NEUTRAL PROTEASE 2-RELATED"/>
    <property type="match status" value="1"/>
</dbReference>
<dbReference type="Pfam" id="PF02102">
    <property type="entry name" value="Peptidase_M35"/>
    <property type="match status" value="1"/>
</dbReference>
<dbReference type="PRINTS" id="PR00768">
    <property type="entry name" value="DEUTEROLYSIN"/>
</dbReference>
<dbReference type="SMART" id="SM01351">
    <property type="entry name" value="Aspzincin_M35"/>
    <property type="match status" value="1"/>
</dbReference>
<dbReference type="SUPFAM" id="SSF55486">
    <property type="entry name" value="Metalloproteases ('zincins'), catalytic domain"/>
    <property type="match status" value="1"/>
</dbReference>